<accession>Q8DR31</accession>
<organism>
    <name type="scientific">Streptococcus pneumoniae (strain ATCC BAA-255 / R6)</name>
    <dbReference type="NCBI Taxonomy" id="171101"/>
    <lineage>
        <taxon>Bacteria</taxon>
        <taxon>Bacillati</taxon>
        <taxon>Bacillota</taxon>
        <taxon>Bacilli</taxon>
        <taxon>Lactobacillales</taxon>
        <taxon>Streptococcaceae</taxon>
        <taxon>Streptococcus</taxon>
    </lineage>
</organism>
<name>MTLD_STRR6</name>
<protein>
    <recommendedName>
        <fullName evidence="1">Mannitol-1-phosphate 5-dehydrogenase</fullName>
        <ecNumber evidence="1">1.1.1.17</ecNumber>
    </recommendedName>
</protein>
<feature type="chain" id="PRO_0000170727" description="Mannitol-1-phosphate 5-dehydrogenase">
    <location>
        <begin position="1"/>
        <end position="378"/>
    </location>
</feature>
<feature type="binding site" evidence="1">
    <location>
        <begin position="4"/>
        <end position="15"/>
    </location>
    <ligand>
        <name>NAD(+)</name>
        <dbReference type="ChEBI" id="CHEBI:57540"/>
    </ligand>
</feature>
<sequence>MKHSVHFGAGNIGRGFIGEILFKNGFHIDFVDVNNQIIHALNEKGKYEIEIAQKGQSRIEVTNVAGINSKEHPEQVIEAIQKTDIITTAIGPNILPFIAELLAKGIEARRVAGNTQVLDVMACENMIGGSQFLYQEVKKYLSPEGLTFADNYIGFPNAAVDRIVPAQSHEDSLFVVVEPFNEWVVETKRLKNPDLRLKDVHYEEDLEPFIERKLFSVNSGHATSAYIGAHYGAKTILEALQNPNIKSRIESVLAEIRSLLIAKWNFDKKELENYHKVIIERFENPFIVDEVSRVARTPIRKLGYNERFIRPIRELKELSLSYKNLLKTVGYAFDYRDVNDEESIRLGELLAKQLVKDVVIQVTGLDDQELIEQIVEYI</sequence>
<evidence type="ECO:0000255" key="1">
    <source>
        <dbReference type="HAMAP-Rule" id="MF_00196"/>
    </source>
</evidence>
<gene>
    <name evidence="1" type="primary">mtlD</name>
    <name type="ordered locus">spr0359</name>
</gene>
<proteinExistence type="inferred from homology"/>
<comment type="catalytic activity">
    <reaction evidence="1">
        <text>D-mannitol 1-phosphate + NAD(+) = beta-D-fructose 6-phosphate + NADH + H(+)</text>
        <dbReference type="Rhea" id="RHEA:19661"/>
        <dbReference type="ChEBI" id="CHEBI:15378"/>
        <dbReference type="ChEBI" id="CHEBI:57540"/>
        <dbReference type="ChEBI" id="CHEBI:57634"/>
        <dbReference type="ChEBI" id="CHEBI:57945"/>
        <dbReference type="ChEBI" id="CHEBI:61381"/>
        <dbReference type="EC" id="1.1.1.17"/>
    </reaction>
</comment>
<comment type="similarity">
    <text evidence="1">Belongs to the mannitol dehydrogenase family.</text>
</comment>
<dbReference type="EC" id="1.1.1.17" evidence="1"/>
<dbReference type="EMBL" id="AE007317">
    <property type="protein sequence ID" value="AAK99163.1"/>
    <property type="molecule type" value="Genomic_DNA"/>
</dbReference>
<dbReference type="PIR" id="G97916">
    <property type="entry name" value="G97916"/>
</dbReference>
<dbReference type="RefSeq" id="NP_357953.1">
    <property type="nucleotide sequence ID" value="NC_003098.1"/>
</dbReference>
<dbReference type="RefSeq" id="WP_000682974.1">
    <property type="nucleotide sequence ID" value="NC_003098.1"/>
</dbReference>
<dbReference type="SMR" id="Q8DR31"/>
<dbReference type="STRING" id="171101.spr0359"/>
<dbReference type="KEGG" id="spr:spr0359"/>
<dbReference type="PATRIC" id="fig|171101.6.peg.399"/>
<dbReference type="eggNOG" id="COG0246">
    <property type="taxonomic scope" value="Bacteria"/>
</dbReference>
<dbReference type="HOGENOM" id="CLU_036089_2_0_9"/>
<dbReference type="Proteomes" id="UP000000586">
    <property type="component" value="Chromosome"/>
</dbReference>
<dbReference type="GO" id="GO:0005829">
    <property type="term" value="C:cytosol"/>
    <property type="evidence" value="ECO:0000318"/>
    <property type="project" value="GO_Central"/>
</dbReference>
<dbReference type="GO" id="GO:0008926">
    <property type="term" value="F:mannitol-1-phosphate 5-dehydrogenase activity"/>
    <property type="evidence" value="ECO:0000318"/>
    <property type="project" value="GO_Central"/>
</dbReference>
<dbReference type="GO" id="GO:0019592">
    <property type="term" value="P:mannitol catabolic process"/>
    <property type="evidence" value="ECO:0000318"/>
    <property type="project" value="GO_Central"/>
</dbReference>
<dbReference type="FunFam" id="1.10.1040.10:FF:000042">
    <property type="entry name" value="Mannitol-1-phosphate 5-dehydrogenase"/>
    <property type="match status" value="1"/>
</dbReference>
<dbReference type="FunFam" id="3.40.50.720:FF:000586">
    <property type="entry name" value="Mannitol-1-phosphate 5-dehydrogenase"/>
    <property type="match status" value="1"/>
</dbReference>
<dbReference type="Gene3D" id="1.10.1040.10">
    <property type="entry name" value="N-(1-d-carboxylethyl)-l-norvaline Dehydrogenase, domain 2"/>
    <property type="match status" value="1"/>
</dbReference>
<dbReference type="Gene3D" id="3.40.50.720">
    <property type="entry name" value="NAD(P)-binding Rossmann-like Domain"/>
    <property type="match status" value="1"/>
</dbReference>
<dbReference type="HAMAP" id="MF_00196">
    <property type="entry name" value="Mannitol_dehydrog"/>
    <property type="match status" value="1"/>
</dbReference>
<dbReference type="InterPro" id="IPR008927">
    <property type="entry name" value="6-PGluconate_DH-like_C_sf"/>
</dbReference>
<dbReference type="InterPro" id="IPR013328">
    <property type="entry name" value="6PGD_dom2"/>
</dbReference>
<dbReference type="InterPro" id="IPR023028">
    <property type="entry name" value="Mannitol_1_phos_5_DH"/>
</dbReference>
<dbReference type="InterPro" id="IPR000669">
    <property type="entry name" value="Mannitol_DH"/>
</dbReference>
<dbReference type="InterPro" id="IPR013118">
    <property type="entry name" value="Mannitol_DH_C"/>
</dbReference>
<dbReference type="InterPro" id="IPR023027">
    <property type="entry name" value="Mannitol_DH_CS"/>
</dbReference>
<dbReference type="InterPro" id="IPR013131">
    <property type="entry name" value="Mannitol_DH_N"/>
</dbReference>
<dbReference type="InterPro" id="IPR036291">
    <property type="entry name" value="NAD(P)-bd_dom_sf"/>
</dbReference>
<dbReference type="NCBIfam" id="NF002647">
    <property type="entry name" value="PRK02318.1-3"/>
    <property type="match status" value="1"/>
</dbReference>
<dbReference type="NCBIfam" id="NF002652">
    <property type="entry name" value="PRK02318.2-5"/>
    <property type="match status" value="1"/>
</dbReference>
<dbReference type="PANTHER" id="PTHR30524:SF0">
    <property type="entry name" value="ALTRONATE OXIDOREDUCTASE-RELATED"/>
    <property type="match status" value="1"/>
</dbReference>
<dbReference type="PANTHER" id="PTHR30524">
    <property type="entry name" value="MANNITOL-1-PHOSPHATE 5-DEHYDROGENASE"/>
    <property type="match status" value="1"/>
</dbReference>
<dbReference type="Pfam" id="PF01232">
    <property type="entry name" value="Mannitol_dh"/>
    <property type="match status" value="1"/>
</dbReference>
<dbReference type="Pfam" id="PF08125">
    <property type="entry name" value="Mannitol_dh_C"/>
    <property type="match status" value="1"/>
</dbReference>
<dbReference type="PRINTS" id="PR00084">
    <property type="entry name" value="MTLDHDRGNASE"/>
</dbReference>
<dbReference type="SUPFAM" id="SSF48179">
    <property type="entry name" value="6-phosphogluconate dehydrogenase C-terminal domain-like"/>
    <property type="match status" value="1"/>
</dbReference>
<dbReference type="SUPFAM" id="SSF51735">
    <property type="entry name" value="NAD(P)-binding Rossmann-fold domains"/>
    <property type="match status" value="1"/>
</dbReference>
<dbReference type="PROSITE" id="PS00974">
    <property type="entry name" value="MANNITOL_DHGENASE"/>
    <property type="match status" value="1"/>
</dbReference>
<reference key="1">
    <citation type="journal article" date="2001" name="J. Bacteriol.">
        <title>Genome of the bacterium Streptococcus pneumoniae strain R6.</title>
        <authorList>
            <person name="Hoskins J."/>
            <person name="Alborn W.E. Jr."/>
            <person name="Arnold J."/>
            <person name="Blaszczak L.C."/>
            <person name="Burgett S."/>
            <person name="DeHoff B.S."/>
            <person name="Estrem S.T."/>
            <person name="Fritz L."/>
            <person name="Fu D.-J."/>
            <person name="Fuller W."/>
            <person name="Geringer C."/>
            <person name="Gilmour R."/>
            <person name="Glass J.S."/>
            <person name="Khoja H."/>
            <person name="Kraft A.R."/>
            <person name="Lagace R.E."/>
            <person name="LeBlanc D.J."/>
            <person name="Lee L.N."/>
            <person name="Lefkowitz E.J."/>
            <person name="Lu J."/>
            <person name="Matsushima P."/>
            <person name="McAhren S.M."/>
            <person name="McHenney M."/>
            <person name="McLeaster K."/>
            <person name="Mundy C.W."/>
            <person name="Nicas T.I."/>
            <person name="Norris F.H."/>
            <person name="O'Gara M."/>
            <person name="Peery R.B."/>
            <person name="Robertson G.T."/>
            <person name="Rockey P."/>
            <person name="Sun P.-M."/>
            <person name="Winkler M.E."/>
            <person name="Yang Y."/>
            <person name="Young-Bellido M."/>
            <person name="Zhao G."/>
            <person name="Zook C.A."/>
            <person name="Baltz R.H."/>
            <person name="Jaskunas S.R."/>
            <person name="Rosteck P.R. Jr."/>
            <person name="Skatrud P.L."/>
            <person name="Glass J.I."/>
        </authorList>
    </citation>
    <scope>NUCLEOTIDE SEQUENCE [LARGE SCALE GENOMIC DNA]</scope>
    <source>
        <strain>ATCC BAA-255 / R6</strain>
    </source>
</reference>
<keyword id="KW-0520">NAD</keyword>
<keyword id="KW-0560">Oxidoreductase</keyword>
<keyword id="KW-1185">Reference proteome</keyword>